<comment type="function">
    <text evidence="1">ATP-binding RNA helicase involved in the biogenesis of 60S ribosomal subunits and is required for the normal formation of 25S and 5.8S rRNAs.</text>
</comment>
<comment type="catalytic activity">
    <reaction>
        <text>ATP + H2O = ADP + phosphate + H(+)</text>
        <dbReference type="Rhea" id="RHEA:13065"/>
        <dbReference type="ChEBI" id="CHEBI:15377"/>
        <dbReference type="ChEBI" id="CHEBI:15378"/>
        <dbReference type="ChEBI" id="CHEBI:30616"/>
        <dbReference type="ChEBI" id="CHEBI:43474"/>
        <dbReference type="ChEBI" id="CHEBI:456216"/>
        <dbReference type="EC" id="3.6.4.13"/>
    </reaction>
</comment>
<comment type="subcellular location">
    <subcellularLocation>
        <location evidence="1">Nucleus</location>
        <location evidence="1">Nucleolus</location>
    </subcellularLocation>
</comment>
<comment type="domain">
    <text>The Q motif is unique to and characteristic of the DEAD box family of RNA helicases and controls ATP binding and hydrolysis.</text>
</comment>
<comment type="similarity">
    <text evidence="5">Belongs to the DEAD box helicase family. DDX54/DBP10 subfamily.</text>
</comment>
<gene>
    <name type="primary">DBP10</name>
    <name type="ORF">PICST_80003</name>
</gene>
<evidence type="ECO:0000250" key="1"/>
<evidence type="ECO:0000255" key="2">
    <source>
        <dbReference type="PROSITE-ProRule" id="PRU00541"/>
    </source>
</evidence>
<evidence type="ECO:0000255" key="3">
    <source>
        <dbReference type="PROSITE-ProRule" id="PRU00542"/>
    </source>
</evidence>
<evidence type="ECO:0000256" key="4">
    <source>
        <dbReference type="SAM" id="MobiDB-lite"/>
    </source>
</evidence>
<evidence type="ECO:0000305" key="5"/>
<name>DBP10_PICST</name>
<proteinExistence type="inferred from homology"/>
<protein>
    <recommendedName>
        <fullName>ATP-dependent RNA helicase DBP10</fullName>
        <ecNumber>3.6.4.13</ecNumber>
    </recommendedName>
</protein>
<sequence length="931" mass="105714">MSDNEEDYDIARSLTVNLEDSDSDSGSDFSDEEQEVQDIISSEDEAEEQPKKKQKTAKPAKEAFPSLELSGDEDEQDDDKDMASYFAANNPQAKKAKAGSFQSFGLSKLVLTNIAKKGYRQPTPIQRKTIPLIMANRDVVGMARTGSGKTAAFTLPVIEKLKGHSARVGIRAIILSPSRELALQTYKQVKEFSKGSDLRAIVLTGGDSLEDQFSSMVSNPDIVIATPGRFLHLQVEMQLDLKTVEYIVFDEADHLFEQGFAEQLNELLAVLPPQRQSLLFSATLPRSLVDFAKAGLSNPVLVRLDADSKISDQLQMAFFTTKKNEREANLLYVLQEVIKMPLGTAEQIKKLRLMDKRVNDEAEEEELENESGSKRKYKFKKERLPSANVLPSPHSTIVFVPTKHHVEYITTLLRDAGYLVSYIYGTLDQHARKNQLYQFRLGMTTVLVVTDVAARGIDIPVLANVVNYTLPGSSKIFIHRVGRTARAGNKGWAYSIVNEKELPYLLDLELFLGKKILLTAMQEQKCQLLKDKQGDNYVEPKVQYTDRLVLGSCPRLSLETFEELYENLLRNHYELSVIKEVAAKGEKLYYRTRKAASTESVKRAKEIMDTGTWDDQHLLFGPNLEKEKEKFLAKLANRHVKETVFEFNKKGNDRDEDSLVSFMHRRRKQLAPIQRRASERRDLLQREREAGLTHGIEDEILKAHGETGYSASGINDVDEEELQNAFEDADQLSSKSNKKNYRDDRFFISHYAPASVIQDQQLNITSSFANEAASATFDLDNDDKIGNGKQVMQWDRKKGKYINSQSTDKKFIIGESGAKIPATYRSGKFDEWKKKRNMQPAKVGSLETEGESKQRFKHKRNAAPKLPDKYRDDYHKQKKKVEKAVESGRDVKGYHKPGQRSEIKSTEDIRKARLLKEKKMAKNARPSRKRK</sequence>
<feature type="chain" id="PRO_0000285154" description="ATP-dependent RNA helicase DBP10">
    <location>
        <begin position="1"/>
        <end position="931"/>
    </location>
</feature>
<feature type="domain" description="Helicase ATP-binding" evidence="2">
    <location>
        <begin position="130"/>
        <end position="302"/>
    </location>
</feature>
<feature type="domain" description="Helicase C-terminal" evidence="3">
    <location>
        <begin position="372"/>
        <end position="532"/>
    </location>
</feature>
<feature type="region of interest" description="Disordered" evidence="4">
    <location>
        <begin position="1"/>
        <end position="78"/>
    </location>
</feature>
<feature type="region of interest" description="Disordered" evidence="4">
    <location>
        <begin position="836"/>
        <end position="910"/>
    </location>
</feature>
<feature type="short sequence motif" description="Q motif">
    <location>
        <begin position="99"/>
        <end position="127"/>
    </location>
</feature>
<feature type="short sequence motif" description="DEAD box">
    <location>
        <begin position="250"/>
        <end position="253"/>
    </location>
</feature>
<feature type="compositionally biased region" description="Acidic residues" evidence="4">
    <location>
        <begin position="19"/>
        <end position="47"/>
    </location>
</feature>
<feature type="compositionally biased region" description="Basic and acidic residues" evidence="4">
    <location>
        <begin position="866"/>
        <end position="875"/>
    </location>
</feature>
<feature type="compositionally biased region" description="Basic and acidic residues" evidence="4">
    <location>
        <begin position="882"/>
        <end position="910"/>
    </location>
</feature>
<feature type="binding site" evidence="2">
    <location>
        <begin position="143"/>
        <end position="150"/>
    </location>
    <ligand>
        <name>ATP</name>
        <dbReference type="ChEBI" id="CHEBI:30616"/>
    </ligand>
</feature>
<dbReference type="EC" id="3.6.4.13"/>
<dbReference type="EMBL" id="CP000502">
    <property type="protein sequence ID" value="ABN68395.2"/>
    <property type="molecule type" value="Genomic_DNA"/>
</dbReference>
<dbReference type="RefSeq" id="XP_001386424.2">
    <property type="nucleotide sequence ID" value="XM_001386387.1"/>
</dbReference>
<dbReference type="SMR" id="A3LZT3"/>
<dbReference type="FunCoup" id="A3LZT3">
    <property type="interactions" value="1113"/>
</dbReference>
<dbReference type="STRING" id="322104.A3LZT3"/>
<dbReference type="GeneID" id="4841046"/>
<dbReference type="KEGG" id="pic:PICST_80003"/>
<dbReference type="eggNOG" id="KOG0337">
    <property type="taxonomic scope" value="Eukaryota"/>
</dbReference>
<dbReference type="HOGENOM" id="CLU_003041_5_2_1"/>
<dbReference type="InParanoid" id="A3LZT3"/>
<dbReference type="OMA" id="EDQFGMM"/>
<dbReference type="OrthoDB" id="10261375at2759"/>
<dbReference type="Proteomes" id="UP000002258">
    <property type="component" value="Chromosome 8"/>
</dbReference>
<dbReference type="GO" id="GO:0005829">
    <property type="term" value="C:cytosol"/>
    <property type="evidence" value="ECO:0007669"/>
    <property type="project" value="TreeGrafter"/>
</dbReference>
<dbReference type="GO" id="GO:0005730">
    <property type="term" value="C:nucleolus"/>
    <property type="evidence" value="ECO:0007669"/>
    <property type="project" value="UniProtKB-SubCell"/>
</dbReference>
<dbReference type="GO" id="GO:0030687">
    <property type="term" value="C:preribosome, large subunit precursor"/>
    <property type="evidence" value="ECO:0007669"/>
    <property type="project" value="EnsemblFungi"/>
</dbReference>
<dbReference type="GO" id="GO:0005524">
    <property type="term" value="F:ATP binding"/>
    <property type="evidence" value="ECO:0007669"/>
    <property type="project" value="UniProtKB-KW"/>
</dbReference>
<dbReference type="GO" id="GO:0016887">
    <property type="term" value="F:ATP hydrolysis activity"/>
    <property type="evidence" value="ECO:0007669"/>
    <property type="project" value="RHEA"/>
</dbReference>
<dbReference type="GO" id="GO:0042802">
    <property type="term" value="F:identical protein binding"/>
    <property type="evidence" value="ECO:0007669"/>
    <property type="project" value="EnsemblFungi"/>
</dbReference>
<dbReference type="GO" id="GO:0003723">
    <property type="term" value="F:RNA binding"/>
    <property type="evidence" value="ECO:0007669"/>
    <property type="project" value="UniProtKB-KW"/>
</dbReference>
<dbReference type="GO" id="GO:0003724">
    <property type="term" value="F:RNA helicase activity"/>
    <property type="evidence" value="ECO:0007669"/>
    <property type="project" value="UniProtKB-EC"/>
</dbReference>
<dbReference type="GO" id="GO:1902626">
    <property type="term" value="P:assembly of large subunit precursor of preribosome"/>
    <property type="evidence" value="ECO:0007669"/>
    <property type="project" value="EnsemblFungi"/>
</dbReference>
<dbReference type="GO" id="GO:0000466">
    <property type="term" value="P:maturation of 5.8S rRNA from tricistronic rRNA transcript (SSU-rRNA, 5.8S rRNA, LSU-rRNA)"/>
    <property type="evidence" value="ECO:0007669"/>
    <property type="project" value="EnsemblFungi"/>
</dbReference>
<dbReference type="GO" id="GO:0000463">
    <property type="term" value="P:maturation of LSU-rRNA from tricistronic rRNA transcript (SSU-rRNA, 5.8S rRNA, LSU-rRNA)"/>
    <property type="evidence" value="ECO:0007669"/>
    <property type="project" value="EnsemblFungi"/>
</dbReference>
<dbReference type="CDD" id="cd17959">
    <property type="entry name" value="DEADc_DDX54"/>
    <property type="match status" value="1"/>
</dbReference>
<dbReference type="CDD" id="cd18787">
    <property type="entry name" value="SF2_C_DEAD"/>
    <property type="match status" value="1"/>
</dbReference>
<dbReference type="FunFam" id="3.40.50.300:FF:000865">
    <property type="entry name" value="ATP-dependent RNA helicase DDX54"/>
    <property type="match status" value="1"/>
</dbReference>
<dbReference type="Gene3D" id="3.40.50.300">
    <property type="entry name" value="P-loop containing nucleotide triphosphate hydrolases"/>
    <property type="match status" value="2"/>
</dbReference>
<dbReference type="InterPro" id="IPR012541">
    <property type="entry name" value="DBP10_C"/>
</dbReference>
<dbReference type="InterPro" id="IPR033517">
    <property type="entry name" value="DDX54/DBP10_DEAD-box_helicase"/>
</dbReference>
<dbReference type="InterPro" id="IPR011545">
    <property type="entry name" value="DEAD/DEAH_box_helicase_dom"/>
</dbReference>
<dbReference type="InterPro" id="IPR050079">
    <property type="entry name" value="DEAD_box_RNA_helicase"/>
</dbReference>
<dbReference type="InterPro" id="IPR014001">
    <property type="entry name" value="Helicase_ATP-bd"/>
</dbReference>
<dbReference type="InterPro" id="IPR001650">
    <property type="entry name" value="Helicase_C-like"/>
</dbReference>
<dbReference type="InterPro" id="IPR027417">
    <property type="entry name" value="P-loop_NTPase"/>
</dbReference>
<dbReference type="InterPro" id="IPR014014">
    <property type="entry name" value="RNA_helicase_DEAD_Q_motif"/>
</dbReference>
<dbReference type="PANTHER" id="PTHR47959">
    <property type="entry name" value="ATP-DEPENDENT RNA HELICASE RHLE-RELATED"/>
    <property type="match status" value="1"/>
</dbReference>
<dbReference type="PANTHER" id="PTHR47959:SF8">
    <property type="entry name" value="RNA HELICASE"/>
    <property type="match status" value="1"/>
</dbReference>
<dbReference type="Pfam" id="PF08147">
    <property type="entry name" value="DBP10CT"/>
    <property type="match status" value="1"/>
</dbReference>
<dbReference type="Pfam" id="PF00270">
    <property type="entry name" value="DEAD"/>
    <property type="match status" value="1"/>
</dbReference>
<dbReference type="Pfam" id="PF00271">
    <property type="entry name" value="Helicase_C"/>
    <property type="match status" value="1"/>
</dbReference>
<dbReference type="SMART" id="SM01123">
    <property type="entry name" value="DBP10CT"/>
    <property type="match status" value="1"/>
</dbReference>
<dbReference type="SMART" id="SM00487">
    <property type="entry name" value="DEXDc"/>
    <property type="match status" value="1"/>
</dbReference>
<dbReference type="SMART" id="SM00490">
    <property type="entry name" value="HELICc"/>
    <property type="match status" value="1"/>
</dbReference>
<dbReference type="SUPFAM" id="SSF52540">
    <property type="entry name" value="P-loop containing nucleoside triphosphate hydrolases"/>
    <property type="match status" value="2"/>
</dbReference>
<dbReference type="PROSITE" id="PS51192">
    <property type="entry name" value="HELICASE_ATP_BIND_1"/>
    <property type="match status" value="1"/>
</dbReference>
<dbReference type="PROSITE" id="PS51194">
    <property type="entry name" value="HELICASE_CTER"/>
    <property type="match status" value="1"/>
</dbReference>
<dbReference type="PROSITE" id="PS51195">
    <property type="entry name" value="Q_MOTIF"/>
    <property type="match status" value="1"/>
</dbReference>
<accession>A3LZT3</accession>
<organism>
    <name type="scientific">Scheffersomyces stipitis (strain ATCC 58785 / CBS 6054 / NBRC 10063 / NRRL Y-11545)</name>
    <name type="common">Yeast</name>
    <name type="synonym">Pichia stipitis</name>
    <dbReference type="NCBI Taxonomy" id="322104"/>
    <lineage>
        <taxon>Eukaryota</taxon>
        <taxon>Fungi</taxon>
        <taxon>Dikarya</taxon>
        <taxon>Ascomycota</taxon>
        <taxon>Saccharomycotina</taxon>
        <taxon>Pichiomycetes</taxon>
        <taxon>Debaryomycetaceae</taxon>
        <taxon>Scheffersomyces</taxon>
    </lineage>
</organism>
<keyword id="KW-0067">ATP-binding</keyword>
<keyword id="KW-0347">Helicase</keyword>
<keyword id="KW-0378">Hydrolase</keyword>
<keyword id="KW-0547">Nucleotide-binding</keyword>
<keyword id="KW-0539">Nucleus</keyword>
<keyword id="KW-1185">Reference proteome</keyword>
<keyword id="KW-0690">Ribosome biogenesis</keyword>
<keyword id="KW-0694">RNA-binding</keyword>
<keyword id="KW-0698">rRNA processing</keyword>
<reference key="1">
    <citation type="journal article" date="2007" name="Nat. Biotechnol.">
        <title>Genome sequence of the lignocellulose-bioconverting and xylose-fermenting yeast Pichia stipitis.</title>
        <authorList>
            <person name="Jeffries T.W."/>
            <person name="Grigoriev I.V."/>
            <person name="Grimwood J."/>
            <person name="Laplaza J.M."/>
            <person name="Aerts A."/>
            <person name="Salamov A."/>
            <person name="Schmutz J."/>
            <person name="Lindquist E."/>
            <person name="Dehal P."/>
            <person name="Shapiro H."/>
            <person name="Jin Y.-S."/>
            <person name="Passoth V."/>
            <person name="Richardson P.M."/>
        </authorList>
    </citation>
    <scope>NUCLEOTIDE SEQUENCE [LARGE SCALE GENOMIC DNA]</scope>
    <source>
        <strain>ATCC 58785 / CBS 6054 / NBRC 10063 / NRRL Y-11545</strain>
    </source>
</reference>